<dbReference type="EC" id="3.4.16.4"/>
<dbReference type="EMBL" id="X59965">
    <property type="protein sequence ID" value="CAA42591.1"/>
    <property type="molecule type" value="Genomic_DNA"/>
</dbReference>
<dbReference type="PIR" id="S17674">
    <property type="entry name" value="S17674"/>
</dbReference>
<dbReference type="PDB" id="1ES2">
    <property type="method" value="X-ray"/>
    <property type="resolution" value="1.55 A"/>
    <property type="chains" value="A=30-291"/>
</dbReference>
<dbReference type="PDB" id="1ES3">
    <property type="method" value="X-ray"/>
    <property type="resolution" value="2.20 A"/>
    <property type="chains" value="A=30-291"/>
</dbReference>
<dbReference type="PDB" id="1ES4">
    <property type="method" value="X-ray"/>
    <property type="resolution" value="1.90 A"/>
    <property type="chains" value="A=30-291"/>
</dbReference>
<dbReference type="PDB" id="1ES5">
    <property type="method" value="X-ray"/>
    <property type="resolution" value="1.40 A"/>
    <property type="chains" value="A=30-291"/>
</dbReference>
<dbReference type="PDB" id="1ESI">
    <property type="method" value="X-ray"/>
    <property type="resolution" value="1.80 A"/>
    <property type="chains" value="A=30-291"/>
</dbReference>
<dbReference type="PDB" id="1J9M">
    <property type="method" value="X-ray"/>
    <property type="resolution" value="1.65 A"/>
    <property type="chains" value="A=30-291"/>
</dbReference>
<dbReference type="PDB" id="1SKF">
    <property type="method" value="X-ray"/>
    <property type="resolution" value="2.00 A"/>
    <property type="chains" value="A=30-291"/>
</dbReference>
<dbReference type="PDBsum" id="1ES2"/>
<dbReference type="PDBsum" id="1ES3"/>
<dbReference type="PDBsum" id="1ES4"/>
<dbReference type="PDBsum" id="1ES5"/>
<dbReference type="PDBsum" id="1ESI"/>
<dbReference type="PDBsum" id="1J9M"/>
<dbReference type="PDBsum" id="1SKF"/>
<dbReference type="SMR" id="P39042"/>
<dbReference type="MEROPS" id="S11.004"/>
<dbReference type="BRENDA" id="3.4.16.4">
    <property type="organism ID" value="1284"/>
</dbReference>
<dbReference type="UniPathway" id="UPA00219"/>
<dbReference type="EvolutionaryTrace" id="P39042"/>
<dbReference type="GO" id="GO:0005576">
    <property type="term" value="C:extracellular region"/>
    <property type="evidence" value="ECO:0007669"/>
    <property type="project" value="UniProtKB-SubCell"/>
</dbReference>
<dbReference type="GO" id="GO:0009002">
    <property type="term" value="F:serine-type D-Ala-D-Ala carboxypeptidase activity"/>
    <property type="evidence" value="ECO:0007669"/>
    <property type="project" value="UniProtKB-EC"/>
</dbReference>
<dbReference type="GO" id="GO:0071555">
    <property type="term" value="P:cell wall organization"/>
    <property type="evidence" value="ECO:0007669"/>
    <property type="project" value="UniProtKB-KW"/>
</dbReference>
<dbReference type="GO" id="GO:0009252">
    <property type="term" value="P:peptidoglycan biosynthetic process"/>
    <property type="evidence" value="ECO:0007669"/>
    <property type="project" value="UniProtKB-UniPathway"/>
</dbReference>
<dbReference type="GO" id="GO:0006508">
    <property type="term" value="P:proteolysis"/>
    <property type="evidence" value="ECO:0007669"/>
    <property type="project" value="UniProtKB-KW"/>
</dbReference>
<dbReference type="GO" id="GO:0008360">
    <property type="term" value="P:regulation of cell shape"/>
    <property type="evidence" value="ECO:0007669"/>
    <property type="project" value="UniProtKB-KW"/>
</dbReference>
<dbReference type="Gene3D" id="3.40.710.10">
    <property type="entry name" value="DD-peptidase/beta-lactamase superfamily"/>
    <property type="match status" value="1"/>
</dbReference>
<dbReference type="InterPro" id="IPR012338">
    <property type="entry name" value="Beta-lactam/transpept-like"/>
</dbReference>
<dbReference type="InterPro" id="IPR018044">
    <property type="entry name" value="Peptidase_S11"/>
</dbReference>
<dbReference type="InterPro" id="IPR001967">
    <property type="entry name" value="Peptidase_S11_N"/>
</dbReference>
<dbReference type="PANTHER" id="PTHR21581">
    <property type="entry name" value="D-ALANYL-D-ALANINE CARBOXYPEPTIDASE"/>
    <property type="match status" value="1"/>
</dbReference>
<dbReference type="PANTHER" id="PTHR21581:SF33">
    <property type="entry name" value="D-ALANYL-D-ALANINE CARBOXYPEPTIDASE DACB"/>
    <property type="match status" value="1"/>
</dbReference>
<dbReference type="Pfam" id="PF00768">
    <property type="entry name" value="Peptidase_S11"/>
    <property type="match status" value="1"/>
</dbReference>
<dbReference type="PRINTS" id="PR00725">
    <property type="entry name" value="DADACBPTASE1"/>
</dbReference>
<dbReference type="SUPFAM" id="SSF56601">
    <property type="entry name" value="beta-lactamase/transpeptidase-like"/>
    <property type="match status" value="1"/>
</dbReference>
<organism>
    <name type="scientific">Streptomyces sp. (strain K15)</name>
    <dbReference type="NCBI Taxonomy" id="1958"/>
    <lineage>
        <taxon>Bacteria</taxon>
        <taxon>Bacillati</taxon>
        <taxon>Actinomycetota</taxon>
        <taxon>Actinomycetes</taxon>
        <taxon>Kitasatosporales</taxon>
        <taxon>Streptomycetaceae</taxon>
        <taxon>Streptomyces</taxon>
    </lineage>
</organism>
<protein>
    <recommendedName>
        <fullName>D-alanyl-D-alanine carboxypeptidase</fullName>
        <shortName>DD-carboxypeptidase</shortName>
        <shortName>DD-peptidase</shortName>
        <ecNumber>3.4.16.4</ecNumber>
    </recommendedName>
    <alternativeName>
        <fullName>Penicillin-binding protein</fullName>
        <shortName>PBP</shortName>
    </alternativeName>
</protein>
<name>DACX_STRSK</name>
<evidence type="ECO:0000269" key="1">
    <source>
    </source>
</evidence>
<evidence type="ECO:0000269" key="2">
    <source>
    </source>
</evidence>
<evidence type="ECO:0000305" key="3"/>
<evidence type="ECO:0007829" key="4">
    <source>
        <dbReference type="PDB" id="1ES5"/>
    </source>
</evidence>
<keyword id="KW-0002">3D-structure</keyword>
<keyword id="KW-0121">Carboxypeptidase</keyword>
<keyword id="KW-0133">Cell shape</keyword>
<keyword id="KW-0961">Cell wall biogenesis/degradation</keyword>
<keyword id="KW-0903">Direct protein sequencing</keyword>
<keyword id="KW-0378">Hydrolase</keyword>
<keyword id="KW-0573">Peptidoglycan synthesis</keyword>
<keyword id="KW-0645">Protease</keyword>
<keyword id="KW-0964">Secreted</keyword>
<keyword id="KW-0732">Signal</keyword>
<sequence>MRLRRAAATVITTGALLAAGTLGATPATAVTKPTIAAVGGYAMNNGTGTTLYTKAADTRRSTGSTTKIMTAKVVLAQSNLNLDAKVTIQKAYSDYVVANKPSQAHLIVGDKVTVRQLLYGLMLPSGCDAAYALADKYGSGSQAAARVKSFIGKMNTAATNLGLHNTHFDSFDGIGNGANYSTPRHLTKIASSAMKNSTFRTVVKTKAYTAKTVTKTGSIRTMDTWKNTNGLLSSYSGAIGVKTGSGPEAKYCLVFAATRGGKTVIGTVLASTSIPARESDATKIMNYGFAL</sequence>
<feature type="signal peptide" evidence="2">
    <location>
        <begin position="1"/>
        <end position="29"/>
    </location>
</feature>
<feature type="chain" id="PRO_0000027236" description="D-alanyl-D-alanine carboxypeptidase">
    <location>
        <begin position="30"/>
        <end position="291"/>
    </location>
</feature>
<feature type="active site" description="Acyl-ester intermediate" evidence="2">
    <location>
        <position position="64"/>
    </location>
</feature>
<feature type="active site" description="Proton acceptor" evidence="2">
    <location>
        <position position="67"/>
    </location>
</feature>
<feature type="active site" evidence="2">
    <location>
        <position position="125"/>
    </location>
</feature>
<feature type="binding site">
    <location>
        <position position="242"/>
    </location>
    <ligand>
        <name>substrate</name>
    </ligand>
</feature>
<feature type="mutagenesis site" description="Almost no activity." evidence="1">
    <original>K</original>
    <variation>H</variation>
    <location>
        <position position="67"/>
    </location>
</feature>
<feature type="mutagenesis site" description="Almost no activity." evidence="1">
    <original>S</original>
    <variation>A</variation>
    <location>
        <position position="125"/>
    </location>
</feature>
<feature type="mutagenesis site" description="10% of wild-type catalytic efficiency for aminolysis reaction, but increased catalytic efficiency for hydrolysis reaction." evidence="1">
    <original>C</original>
    <variation>A</variation>
    <variation>N</variation>
    <location>
        <position position="127"/>
    </location>
</feature>
<feature type="sequence conflict" description="In Ref. 2; AA sequence." evidence="3" ref="2">
    <original>T</original>
    <variation>Q</variation>
    <location>
        <position position="70"/>
    </location>
</feature>
<feature type="sequence conflict" description="In Ref. 2; AA sequence." evidence="3" ref="2">
    <original>D</original>
    <variation>S</variation>
    <location>
        <position position="83"/>
    </location>
</feature>
<feature type="strand" evidence="4">
    <location>
        <begin position="38"/>
        <end position="44"/>
    </location>
</feature>
<feature type="turn" evidence="4">
    <location>
        <begin position="45"/>
        <end position="47"/>
    </location>
</feature>
<feature type="strand" evidence="4">
    <location>
        <begin position="50"/>
        <end position="55"/>
    </location>
</feature>
<feature type="helix" evidence="4">
    <location>
        <begin position="63"/>
        <end position="66"/>
    </location>
</feature>
<feature type="helix" evidence="4">
    <location>
        <begin position="67"/>
        <end position="75"/>
    </location>
</feature>
<feature type="strand" evidence="4">
    <location>
        <begin position="85"/>
        <end position="87"/>
    </location>
</feature>
<feature type="helix" evidence="4">
    <location>
        <begin position="90"/>
        <end position="98"/>
    </location>
</feature>
<feature type="strand" evidence="4">
    <location>
        <begin position="111"/>
        <end position="113"/>
    </location>
</feature>
<feature type="helix" evidence="4">
    <location>
        <begin position="114"/>
        <end position="122"/>
    </location>
</feature>
<feature type="helix" evidence="4">
    <location>
        <begin position="127"/>
        <end position="137"/>
    </location>
</feature>
<feature type="strand" evidence="4">
    <location>
        <begin position="140"/>
        <end position="142"/>
    </location>
</feature>
<feature type="helix" evidence="4">
    <location>
        <begin position="143"/>
        <end position="160"/>
    </location>
</feature>
<feature type="strand" evidence="4">
    <location>
        <begin position="169"/>
        <end position="172"/>
    </location>
</feature>
<feature type="helix" evidence="4">
    <location>
        <begin position="183"/>
        <end position="193"/>
    </location>
</feature>
<feature type="helix" evidence="4">
    <location>
        <begin position="197"/>
        <end position="203"/>
    </location>
</feature>
<feature type="strand" evidence="4">
    <location>
        <begin position="206"/>
        <end position="208"/>
    </location>
</feature>
<feature type="strand" evidence="4">
    <location>
        <begin position="211"/>
        <end position="213"/>
    </location>
</feature>
<feature type="strand" evidence="4">
    <location>
        <begin position="219"/>
        <end position="221"/>
    </location>
</feature>
<feature type="helix" evidence="4">
    <location>
        <begin position="231"/>
        <end position="234"/>
    </location>
</feature>
<feature type="strand" evidence="4">
    <location>
        <begin position="238"/>
        <end position="246"/>
    </location>
</feature>
<feature type="turn" evidence="4">
    <location>
        <begin position="247"/>
        <end position="249"/>
    </location>
</feature>
<feature type="strand" evidence="4">
    <location>
        <begin position="250"/>
        <end position="259"/>
    </location>
</feature>
<feature type="strand" evidence="4">
    <location>
        <begin position="262"/>
        <end position="273"/>
    </location>
</feature>
<feature type="helix" evidence="4">
    <location>
        <begin position="274"/>
        <end position="290"/>
    </location>
</feature>
<proteinExistence type="evidence at protein level"/>
<accession>P39042</accession>
<reference key="1">
    <citation type="journal article" date="1991" name="Biochem. J.">
        <title>Amino acid sequence of the penicillin-binding protein/DD-peptidase of Streptomyces K15. Predicted secondary structures of the low Mr penicillin-binding proteins of class A.</title>
        <authorList>
            <person name="Palomeque-Messia P."/>
            <person name="Englebert S."/>
            <person name="Leyh-Bouille M."/>
            <person name="Nguyen-Disteche M."/>
            <person name="Duez C."/>
            <person name="Houba S."/>
            <person name="Dideberg O."/>
            <person name="van Beeumen J."/>
            <person name="Ghuysen J.-M."/>
        </authorList>
    </citation>
    <scope>NUCLEOTIDE SEQUENCE [GENOMIC DNA]</scope>
</reference>
<reference key="2">
    <citation type="journal article" date="1989" name="Biochem. J.">
        <title>The Streptomyces K15 DD-peptidase/penicillin-binding protein. Active site and sequence of the N-terminal region.</title>
        <authorList>
            <person name="Leyh-Bouille M."/>
            <person name="van Beeumen J."/>
            <person name="Renier-Pirlot S."/>
            <person name="Joris B."/>
            <person name="Nguyen-Disteche M."/>
            <person name="Ghuysen J.-M."/>
        </authorList>
    </citation>
    <scope>PROTEIN SEQUENCE OF 30-85</scope>
    <scope>ACTIVE SITE</scope>
</reference>
<reference key="3">
    <citation type="journal article" date="1999" name="J. Biol. Chem.">
        <title>The crystal structure of a penicilloyl-serine transferase of intermediate penicillin sensitivity. The DD-transpeptidase of streptomyces K15.</title>
        <authorList>
            <person name="Fonze E."/>
            <person name="Vermeire M."/>
            <person name="Nguyen-Disteche M."/>
            <person name="Brasseur R."/>
            <person name="Charlier P."/>
        </authorList>
    </citation>
    <scope>X-RAY CRYSTALLOGRAPHY (2.0 ANGSTROMS) OF 30-291</scope>
</reference>
<reference key="4">
    <citation type="journal article" date="2003" name="Biochemistry">
        <title>Catalytic mechanism of the Streptomyces K15 DD-transpeptidase/penicillin-binding protein probed by site-directed mutagenesis and structural analysis.</title>
        <authorList>
            <person name="Rhazi N."/>
            <person name="Charlier P."/>
            <person name="Dehareng D."/>
            <person name="Engher D."/>
            <person name="Vermeire M."/>
            <person name="Frere J.-M."/>
            <person name="Nguyen-Disteche M."/>
            <person name="Fonze E."/>
        </authorList>
    </citation>
    <scope>X-RAY CRYSTALLOGRAPHY (1.65 ANGSTROMS) OF 30-291 OF WILD-TYPE AND MUTANTS HIS-67; ALA-125; ALA-127 AND ASN-127</scope>
    <scope>MUTAGENESIS OF LYS-67; SER-125 AND CYS-127</scope>
    <scope>REACTION MECHANISM</scope>
</reference>
<comment type="function">
    <text>Removes C-terminal D-alanyl residues from sugar-peptide cell wall precursors.</text>
</comment>
<comment type="catalytic activity">
    <reaction>
        <text>Preferential cleavage: (Ac)2-L-Lys-D-Ala-|-D-Ala. Also transpeptidation of peptidyl-alanyl moieties that are N-acyl substituents of D-alanine.</text>
        <dbReference type="EC" id="3.4.16.4"/>
    </reaction>
</comment>
<comment type="pathway">
    <text>Cell wall biogenesis; peptidoglycan biosynthesis.</text>
</comment>
<comment type="subcellular location">
    <subcellularLocation>
        <location evidence="3">Secreted</location>
    </subcellularLocation>
</comment>
<comment type="similarity">
    <text evidence="3">Belongs to the peptidase S11 family.</text>
</comment>